<proteinExistence type="inferred from homology"/>
<name>HSCB_SALTY</name>
<organism>
    <name type="scientific">Salmonella typhimurium (strain LT2 / SGSC1412 / ATCC 700720)</name>
    <dbReference type="NCBI Taxonomy" id="99287"/>
    <lineage>
        <taxon>Bacteria</taxon>
        <taxon>Pseudomonadati</taxon>
        <taxon>Pseudomonadota</taxon>
        <taxon>Gammaproteobacteria</taxon>
        <taxon>Enterobacterales</taxon>
        <taxon>Enterobacteriaceae</taxon>
        <taxon>Salmonella</taxon>
    </lineage>
</organism>
<reference key="1">
    <citation type="journal article" date="2001" name="Nature">
        <title>Complete genome sequence of Salmonella enterica serovar Typhimurium LT2.</title>
        <authorList>
            <person name="McClelland M."/>
            <person name="Sanderson K.E."/>
            <person name="Spieth J."/>
            <person name="Clifton S.W."/>
            <person name="Latreille P."/>
            <person name="Courtney L."/>
            <person name="Porwollik S."/>
            <person name="Ali J."/>
            <person name="Dante M."/>
            <person name="Du F."/>
            <person name="Hou S."/>
            <person name="Layman D."/>
            <person name="Leonard S."/>
            <person name="Nguyen C."/>
            <person name="Scott K."/>
            <person name="Holmes A."/>
            <person name="Grewal N."/>
            <person name="Mulvaney E."/>
            <person name="Ryan E."/>
            <person name="Sun H."/>
            <person name="Florea L."/>
            <person name="Miller W."/>
            <person name="Stoneking T."/>
            <person name="Nhan M."/>
            <person name="Waterston R."/>
            <person name="Wilson R.K."/>
        </authorList>
    </citation>
    <scope>NUCLEOTIDE SEQUENCE [LARGE SCALE GENOMIC DNA]</scope>
    <source>
        <strain>LT2 / SGSC1412 / ATCC 700720</strain>
    </source>
</reference>
<protein>
    <recommendedName>
        <fullName evidence="1">Co-chaperone protein HscB</fullName>
    </recommendedName>
    <alternativeName>
        <fullName evidence="1">Hsc20</fullName>
    </alternativeName>
</protein>
<evidence type="ECO:0000255" key="1">
    <source>
        <dbReference type="HAMAP-Rule" id="MF_00682"/>
    </source>
</evidence>
<feature type="chain" id="PRO_0000070989" description="Co-chaperone protein HscB">
    <location>
        <begin position="1"/>
        <end position="171"/>
    </location>
</feature>
<feature type="domain" description="J" evidence="1">
    <location>
        <begin position="2"/>
        <end position="74"/>
    </location>
</feature>
<dbReference type="EMBL" id="AE006468">
    <property type="protein sequence ID" value="AAL21434.1"/>
    <property type="molecule type" value="Genomic_DNA"/>
</dbReference>
<dbReference type="RefSeq" id="NP_461475.1">
    <property type="nucleotide sequence ID" value="NC_003197.2"/>
</dbReference>
<dbReference type="RefSeq" id="WP_000384396.1">
    <property type="nucleotide sequence ID" value="NC_003197.2"/>
</dbReference>
<dbReference type="SMR" id="Q8ZN41"/>
<dbReference type="STRING" id="99287.STM2540"/>
<dbReference type="PaxDb" id="99287-STM2540"/>
<dbReference type="GeneID" id="1254062"/>
<dbReference type="KEGG" id="stm:STM2540"/>
<dbReference type="PATRIC" id="fig|99287.12.peg.2680"/>
<dbReference type="HOGENOM" id="CLU_068529_2_0_6"/>
<dbReference type="OMA" id="LMFIERF"/>
<dbReference type="PhylomeDB" id="Q8ZN41"/>
<dbReference type="BioCyc" id="SENT99287:STM2540-MONOMER"/>
<dbReference type="Proteomes" id="UP000001014">
    <property type="component" value="Chromosome"/>
</dbReference>
<dbReference type="GO" id="GO:1990230">
    <property type="term" value="C:iron-sulfur cluster transfer complex"/>
    <property type="evidence" value="ECO:0000318"/>
    <property type="project" value="GO_Central"/>
</dbReference>
<dbReference type="GO" id="GO:0001671">
    <property type="term" value="F:ATPase activator activity"/>
    <property type="evidence" value="ECO:0007669"/>
    <property type="project" value="InterPro"/>
</dbReference>
<dbReference type="GO" id="GO:0051087">
    <property type="term" value="F:protein-folding chaperone binding"/>
    <property type="evidence" value="ECO:0007669"/>
    <property type="project" value="InterPro"/>
</dbReference>
<dbReference type="GO" id="GO:0044571">
    <property type="term" value="P:[2Fe-2S] cluster assembly"/>
    <property type="evidence" value="ECO:0007669"/>
    <property type="project" value="InterPro"/>
</dbReference>
<dbReference type="GO" id="GO:0051259">
    <property type="term" value="P:protein complex oligomerization"/>
    <property type="evidence" value="ECO:0007669"/>
    <property type="project" value="InterPro"/>
</dbReference>
<dbReference type="GO" id="GO:0006457">
    <property type="term" value="P:protein folding"/>
    <property type="evidence" value="ECO:0007669"/>
    <property type="project" value="UniProtKB-UniRule"/>
</dbReference>
<dbReference type="CDD" id="cd06257">
    <property type="entry name" value="DnaJ"/>
    <property type="match status" value="1"/>
</dbReference>
<dbReference type="FunFam" id="1.10.287.110:FF:000008">
    <property type="entry name" value="Co-chaperone protein HscB"/>
    <property type="match status" value="1"/>
</dbReference>
<dbReference type="FunFam" id="1.20.1280.20:FF:000001">
    <property type="entry name" value="Co-chaperone protein HscB"/>
    <property type="match status" value="1"/>
</dbReference>
<dbReference type="Gene3D" id="1.10.287.110">
    <property type="entry name" value="DnaJ domain"/>
    <property type="match status" value="1"/>
</dbReference>
<dbReference type="Gene3D" id="1.20.1280.20">
    <property type="entry name" value="HscB, C-terminal domain"/>
    <property type="match status" value="1"/>
</dbReference>
<dbReference type="HAMAP" id="MF_00682">
    <property type="entry name" value="HscB"/>
    <property type="match status" value="1"/>
</dbReference>
<dbReference type="InterPro" id="IPR001623">
    <property type="entry name" value="DnaJ_domain"/>
</dbReference>
<dbReference type="InterPro" id="IPR004640">
    <property type="entry name" value="HscB"/>
</dbReference>
<dbReference type="InterPro" id="IPR036386">
    <property type="entry name" value="HscB_C_sf"/>
</dbReference>
<dbReference type="InterPro" id="IPR009073">
    <property type="entry name" value="HscB_oligo_C"/>
</dbReference>
<dbReference type="InterPro" id="IPR036869">
    <property type="entry name" value="J_dom_sf"/>
</dbReference>
<dbReference type="NCBIfam" id="TIGR00714">
    <property type="entry name" value="hscB"/>
    <property type="match status" value="1"/>
</dbReference>
<dbReference type="NCBIfam" id="NF003449">
    <property type="entry name" value="PRK05014.1"/>
    <property type="match status" value="1"/>
</dbReference>
<dbReference type="PANTHER" id="PTHR14021">
    <property type="entry name" value="IRON-SULFUR CLUSTER CO-CHAPERONE PROTEIN HSCB"/>
    <property type="match status" value="1"/>
</dbReference>
<dbReference type="PANTHER" id="PTHR14021:SF15">
    <property type="entry name" value="IRON-SULFUR CLUSTER CO-CHAPERONE PROTEIN HSCB"/>
    <property type="match status" value="1"/>
</dbReference>
<dbReference type="Pfam" id="PF07743">
    <property type="entry name" value="HSCB_C"/>
    <property type="match status" value="1"/>
</dbReference>
<dbReference type="SMART" id="SM00271">
    <property type="entry name" value="DnaJ"/>
    <property type="match status" value="1"/>
</dbReference>
<dbReference type="SUPFAM" id="SSF46565">
    <property type="entry name" value="Chaperone J-domain"/>
    <property type="match status" value="1"/>
</dbReference>
<dbReference type="SUPFAM" id="SSF47144">
    <property type="entry name" value="HSC20 (HSCB), C-terminal oligomerisation domain"/>
    <property type="match status" value="1"/>
</dbReference>
<dbReference type="PROSITE" id="PS50076">
    <property type="entry name" value="DNAJ_2"/>
    <property type="match status" value="1"/>
</dbReference>
<comment type="function">
    <text evidence="1">Co-chaperone involved in the maturation of iron-sulfur cluster-containing proteins. Seems to help targeting proteins to be folded toward HscA.</text>
</comment>
<comment type="subunit">
    <text evidence="1">Interacts with HscA and stimulates its ATPase activity. Interacts with IscU.</text>
</comment>
<comment type="similarity">
    <text evidence="1">Belongs to the HscB family.</text>
</comment>
<gene>
    <name evidence="1" type="primary">hscB</name>
    <name type="ordered locus">STM2540</name>
</gene>
<keyword id="KW-0143">Chaperone</keyword>
<keyword id="KW-1185">Reference proteome</keyword>
<accession>Q8ZN41</accession>
<sequence length="171" mass="19980">MDYFTLFGLPARYQIDTQALSLRFQDLQRQYHPDKFANGTQAQQLAAVQQSATINQAWQTLRHPLTRAEYLLSLHGFDLASEQHTVRDTAFLMEQLTLREELDDIEQSKDDARLESFIKRVQKMFDARLQQMVEQLDNAAWDAAADTVRKLRFLDKLRSSAEQLEEKLLDF</sequence>